<gene>
    <name evidence="1" type="primary">yeiP</name>
    <name type="ordered locus">SSPA0601</name>
</gene>
<sequence>MPRANEIKKGMVLNYNGKLLIVKDIDIQSPTARGAATLYKMRFSDVRTGLKVEERFKGDDIVDTVTLSRRGVDFSYVDGNEYVFMDKEDYTPYTFTKDQIEEELLFMPEGGMPDMQVLTWDGQLLALELPQTVDLEIVETAPGIKGASASARNKPATLSTGLVIQVPEYLSAGEKIRIHIEERRYMGRAD</sequence>
<feature type="chain" id="PRO_0000384921" description="Elongation factor P-like protein">
    <location>
        <begin position="1"/>
        <end position="190"/>
    </location>
</feature>
<dbReference type="EMBL" id="FM200053">
    <property type="protein sequence ID" value="CAR58730.1"/>
    <property type="status" value="ALT_INIT"/>
    <property type="molecule type" value="Genomic_DNA"/>
</dbReference>
<dbReference type="RefSeq" id="WP_001136822.1">
    <property type="nucleotide sequence ID" value="NC_011147.1"/>
</dbReference>
<dbReference type="SMR" id="B5BE26"/>
<dbReference type="GeneID" id="66756682"/>
<dbReference type="KEGG" id="sek:SSPA0601"/>
<dbReference type="HOGENOM" id="CLU_074944_2_0_6"/>
<dbReference type="Proteomes" id="UP000001869">
    <property type="component" value="Chromosome"/>
</dbReference>
<dbReference type="GO" id="GO:0005829">
    <property type="term" value="C:cytosol"/>
    <property type="evidence" value="ECO:0007669"/>
    <property type="project" value="UniProtKB-ARBA"/>
</dbReference>
<dbReference type="GO" id="GO:0003746">
    <property type="term" value="F:translation elongation factor activity"/>
    <property type="evidence" value="ECO:0007669"/>
    <property type="project" value="UniProtKB-UniRule"/>
</dbReference>
<dbReference type="GO" id="GO:0043043">
    <property type="term" value="P:peptide biosynthetic process"/>
    <property type="evidence" value="ECO:0007669"/>
    <property type="project" value="InterPro"/>
</dbReference>
<dbReference type="CDD" id="cd04470">
    <property type="entry name" value="S1_EF-P_repeat_1"/>
    <property type="match status" value="1"/>
</dbReference>
<dbReference type="CDD" id="cd05794">
    <property type="entry name" value="S1_EF-P_repeat_2"/>
    <property type="match status" value="1"/>
</dbReference>
<dbReference type="FunFam" id="2.40.50.140:FF:000004">
    <property type="entry name" value="Elongation factor P"/>
    <property type="match status" value="1"/>
</dbReference>
<dbReference type="FunFam" id="2.30.30.30:FF:000011">
    <property type="entry name" value="Elongation factor P-like protein"/>
    <property type="match status" value="1"/>
</dbReference>
<dbReference type="FunFam" id="2.40.50.140:FF:000053">
    <property type="entry name" value="Elongation factor P-like protein"/>
    <property type="match status" value="1"/>
</dbReference>
<dbReference type="Gene3D" id="2.30.30.30">
    <property type="match status" value="1"/>
</dbReference>
<dbReference type="Gene3D" id="2.40.50.140">
    <property type="entry name" value="Nucleic acid-binding proteins"/>
    <property type="match status" value="2"/>
</dbReference>
<dbReference type="HAMAP" id="MF_00646">
    <property type="entry name" value="EFP"/>
    <property type="match status" value="1"/>
</dbReference>
<dbReference type="InterPro" id="IPR015365">
    <property type="entry name" value="Elong-fact-P_C"/>
</dbReference>
<dbReference type="InterPro" id="IPR012340">
    <property type="entry name" value="NA-bd_OB-fold"/>
</dbReference>
<dbReference type="InterPro" id="IPR014722">
    <property type="entry name" value="Rib_uL2_dom2"/>
</dbReference>
<dbReference type="InterPro" id="IPR020599">
    <property type="entry name" value="Transl_elong_fac_P/YeiP"/>
</dbReference>
<dbReference type="InterPro" id="IPR013185">
    <property type="entry name" value="Transl_elong_KOW-like"/>
</dbReference>
<dbReference type="InterPro" id="IPR011897">
    <property type="entry name" value="Transl_elong_p-like_YeiP"/>
</dbReference>
<dbReference type="InterPro" id="IPR001059">
    <property type="entry name" value="Transl_elong_P/YeiP_cen"/>
</dbReference>
<dbReference type="InterPro" id="IPR013852">
    <property type="entry name" value="Transl_elong_P/YeiP_CS"/>
</dbReference>
<dbReference type="InterPro" id="IPR008991">
    <property type="entry name" value="Translation_prot_SH3-like_sf"/>
</dbReference>
<dbReference type="NCBIfam" id="NF001810">
    <property type="entry name" value="PRK00529.1"/>
    <property type="match status" value="1"/>
</dbReference>
<dbReference type="NCBIfam" id="NF003392">
    <property type="entry name" value="PRK04542.1"/>
    <property type="match status" value="1"/>
</dbReference>
<dbReference type="NCBIfam" id="TIGR02178">
    <property type="entry name" value="yeiP"/>
    <property type="match status" value="1"/>
</dbReference>
<dbReference type="PANTHER" id="PTHR30053">
    <property type="entry name" value="ELONGATION FACTOR P"/>
    <property type="match status" value="1"/>
</dbReference>
<dbReference type="PANTHER" id="PTHR30053:SF14">
    <property type="entry name" value="TRANSLATION ELONGATION FACTOR KOW-LIKE DOMAIN-CONTAINING PROTEIN"/>
    <property type="match status" value="1"/>
</dbReference>
<dbReference type="Pfam" id="PF01132">
    <property type="entry name" value="EFP"/>
    <property type="match status" value="1"/>
</dbReference>
<dbReference type="Pfam" id="PF08207">
    <property type="entry name" value="EFP_N"/>
    <property type="match status" value="1"/>
</dbReference>
<dbReference type="Pfam" id="PF09285">
    <property type="entry name" value="Elong-fact-P_C"/>
    <property type="match status" value="1"/>
</dbReference>
<dbReference type="PIRSF" id="PIRSF005901">
    <property type="entry name" value="EF-P"/>
    <property type="match status" value="1"/>
</dbReference>
<dbReference type="SMART" id="SM01185">
    <property type="entry name" value="EFP"/>
    <property type="match status" value="1"/>
</dbReference>
<dbReference type="SMART" id="SM00841">
    <property type="entry name" value="Elong-fact-P_C"/>
    <property type="match status" value="1"/>
</dbReference>
<dbReference type="SUPFAM" id="SSF50249">
    <property type="entry name" value="Nucleic acid-binding proteins"/>
    <property type="match status" value="2"/>
</dbReference>
<dbReference type="SUPFAM" id="SSF50104">
    <property type="entry name" value="Translation proteins SH3-like domain"/>
    <property type="match status" value="1"/>
</dbReference>
<dbReference type="PROSITE" id="PS01275">
    <property type="entry name" value="EFP"/>
    <property type="match status" value="1"/>
</dbReference>
<comment type="similarity">
    <text evidence="1">Belongs to the elongation factor P family.</text>
</comment>
<comment type="sequence caution" evidence="2">
    <conflict type="erroneous initiation">
        <sequence resource="EMBL-CDS" id="CAR58730"/>
    </conflict>
</comment>
<accession>B5BE26</accession>
<protein>
    <recommendedName>
        <fullName evidence="1">Elongation factor P-like protein</fullName>
    </recommendedName>
</protein>
<evidence type="ECO:0000255" key="1">
    <source>
        <dbReference type="HAMAP-Rule" id="MF_00646"/>
    </source>
</evidence>
<evidence type="ECO:0000305" key="2"/>
<name>EFPL_SALPK</name>
<reference key="1">
    <citation type="journal article" date="2009" name="BMC Genomics">
        <title>Pseudogene accumulation in the evolutionary histories of Salmonella enterica serovars Paratyphi A and Typhi.</title>
        <authorList>
            <person name="Holt K.E."/>
            <person name="Thomson N.R."/>
            <person name="Wain J."/>
            <person name="Langridge G.C."/>
            <person name="Hasan R."/>
            <person name="Bhutta Z.A."/>
            <person name="Quail M.A."/>
            <person name="Norbertczak H."/>
            <person name="Walker D."/>
            <person name="Simmonds M."/>
            <person name="White B."/>
            <person name="Bason N."/>
            <person name="Mungall K."/>
            <person name="Dougan G."/>
            <person name="Parkhill J."/>
        </authorList>
    </citation>
    <scope>NUCLEOTIDE SEQUENCE [LARGE SCALE GENOMIC DNA]</scope>
    <source>
        <strain>AKU_12601</strain>
    </source>
</reference>
<organism>
    <name type="scientific">Salmonella paratyphi A (strain AKU_12601)</name>
    <dbReference type="NCBI Taxonomy" id="554290"/>
    <lineage>
        <taxon>Bacteria</taxon>
        <taxon>Pseudomonadati</taxon>
        <taxon>Pseudomonadota</taxon>
        <taxon>Gammaproteobacteria</taxon>
        <taxon>Enterobacterales</taxon>
        <taxon>Enterobacteriaceae</taxon>
        <taxon>Salmonella</taxon>
    </lineage>
</organism>
<proteinExistence type="inferred from homology"/>